<dbReference type="EC" id="7.1.1.-" evidence="1"/>
<dbReference type="EMBL" id="CP001230">
    <property type="protein sequence ID" value="ACO04558.1"/>
    <property type="molecule type" value="Genomic_DNA"/>
</dbReference>
<dbReference type="RefSeq" id="WP_012676795.1">
    <property type="nucleotide sequence ID" value="NC_012440.1"/>
</dbReference>
<dbReference type="SMR" id="C0QR89"/>
<dbReference type="STRING" id="123214.PERMA_1417"/>
<dbReference type="PaxDb" id="123214-PERMA_1417"/>
<dbReference type="KEGG" id="pmx:PERMA_1417"/>
<dbReference type="eggNOG" id="COG0713">
    <property type="taxonomic scope" value="Bacteria"/>
</dbReference>
<dbReference type="HOGENOM" id="CLU_144724_0_0_0"/>
<dbReference type="OrthoDB" id="9810120at2"/>
<dbReference type="Proteomes" id="UP000001366">
    <property type="component" value="Chromosome"/>
</dbReference>
<dbReference type="GO" id="GO:0030964">
    <property type="term" value="C:NADH dehydrogenase complex"/>
    <property type="evidence" value="ECO:0007669"/>
    <property type="project" value="TreeGrafter"/>
</dbReference>
<dbReference type="GO" id="GO:0005886">
    <property type="term" value="C:plasma membrane"/>
    <property type="evidence" value="ECO:0007669"/>
    <property type="project" value="UniProtKB-SubCell"/>
</dbReference>
<dbReference type="GO" id="GO:0050136">
    <property type="term" value="F:NADH:ubiquinone reductase (non-electrogenic) activity"/>
    <property type="evidence" value="ECO:0007669"/>
    <property type="project" value="UniProtKB-UniRule"/>
</dbReference>
<dbReference type="GO" id="GO:0048038">
    <property type="term" value="F:quinone binding"/>
    <property type="evidence" value="ECO:0007669"/>
    <property type="project" value="UniProtKB-KW"/>
</dbReference>
<dbReference type="GO" id="GO:0042773">
    <property type="term" value="P:ATP synthesis coupled electron transport"/>
    <property type="evidence" value="ECO:0007669"/>
    <property type="project" value="InterPro"/>
</dbReference>
<dbReference type="FunFam" id="1.10.287.3510:FF:000001">
    <property type="entry name" value="NADH-quinone oxidoreductase subunit K"/>
    <property type="match status" value="1"/>
</dbReference>
<dbReference type="Gene3D" id="1.10.287.3510">
    <property type="match status" value="1"/>
</dbReference>
<dbReference type="HAMAP" id="MF_01456">
    <property type="entry name" value="NDH1_NuoK"/>
    <property type="match status" value="1"/>
</dbReference>
<dbReference type="InterPro" id="IPR001133">
    <property type="entry name" value="NADH_UbQ_OxRdtase_chain4L/K"/>
</dbReference>
<dbReference type="InterPro" id="IPR039428">
    <property type="entry name" value="NUOK/Mnh_C1-like"/>
</dbReference>
<dbReference type="NCBIfam" id="NF004320">
    <property type="entry name" value="PRK05715.1-2"/>
    <property type="match status" value="1"/>
</dbReference>
<dbReference type="NCBIfam" id="NF004321">
    <property type="entry name" value="PRK05715.1-3"/>
    <property type="match status" value="1"/>
</dbReference>
<dbReference type="NCBIfam" id="NF004323">
    <property type="entry name" value="PRK05715.1-5"/>
    <property type="match status" value="1"/>
</dbReference>
<dbReference type="PANTHER" id="PTHR11434:SF16">
    <property type="entry name" value="NADH-UBIQUINONE OXIDOREDUCTASE CHAIN 4L"/>
    <property type="match status" value="1"/>
</dbReference>
<dbReference type="PANTHER" id="PTHR11434">
    <property type="entry name" value="NADH-UBIQUINONE OXIDOREDUCTASE SUBUNIT ND4L"/>
    <property type="match status" value="1"/>
</dbReference>
<dbReference type="Pfam" id="PF00420">
    <property type="entry name" value="Oxidored_q2"/>
    <property type="match status" value="1"/>
</dbReference>
<proteinExistence type="inferred from homology"/>
<organism>
    <name type="scientific">Persephonella marina (strain DSM 14350 / EX-H1)</name>
    <dbReference type="NCBI Taxonomy" id="123214"/>
    <lineage>
        <taxon>Bacteria</taxon>
        <taxon>Pseudomonadati</taxon>
        <taxon>Aquificota</taxon>
        <taxon>Aquificia</taxon>
        <taxon>Aquificales</taxon>
        <taxon>Hydrogenothermaceae</taxon>
        <taxon>Persephonella</taxon>
    </lineage>
</organism>
<feature type="chain" id="PRO_0000390157" description="NADH-quinone oxidoreductase subunit K">
    <location>
        <begin position="1"/>
        <end position="100"/>
    </location>
</feature>
<feature type="transmembrane region" description="Helical" evidence="1">
    <location>
        <begin position="4"/>
        <end position="24"/>
    </location>
</feature>
<feature type="transmembrane region" description="Helical" evidence="1">
    <location>
        <begin position="29"/>
        <end position="49"/>
    </location>
</feature>
<feature type="transmembrane region" description="Helical" evidence="1">
    <location>
        <begin position="60"/>
        <end position="80"/>
    </location>
</feature>
<accession>C0QR89</accession>
<evidence type="ECO:0000255" key="1">
    <source>
        <dbReference type="HAMAP-Rule" id="MF_01456"/>
    </source>
</evidence>
<sequence length="100" mass="11073">MVPYEYYVVLSGLLMVLGLIGIIIRKNLIAMLLSTELMLNAVNIAFVAFDMKLYDVSGQVFVFFILTIAAAEAAVGLGLIMAIYRLRKDVDVNTLTELKL</sequence>
<gene>
    <name evidence="1" type="primary">nuoK</name>
    <name type="ordered locus">PERMA_1417</name>
</gene>
<name>NUOK_PERMH</name>
<protein>
    <recommendedName>
        <fullName evidence="1">NADH-quinone oxidoreductase subunit K</fullName>
        <ecNumber evidence="1">7.1.1.-</ecNumber>
    </recommendedName>
    <alternativeName>
        <fullName evidence="1">NADH dehydrogenase I subunit K</fullName>
    </alternativeName>
    <alternativeName>
        <fullName evidence="1">NDH-1 subunit K</fullName>
    </alternativeName>
</protein>
<reference key="1">
    <citation type="journal article" date="2009" name="J. Bacteriol.">
        <title>Complete and draft genome sequences of six members of the Aquificales.</title>
        <authorList>
            <person name="Reysenbach A.-L."/>
            <person name="Hamamura N."/>
            <person name="Podar M."/>
            <person name="Griffiths E."/>
            <person name="Ferreira S."/>
            <person name="Hochstein R."/>
            <person name="Heidelberg J."/>
            <person name="Johnson J."/>
            <person name="Mead D."/>
            <person name="Pohorille A."/>
            <person name="Sarmiento M."/>
            <person name="Schweighofer K."/>
            <person name="Seshadri R."/>
            <person name="Voytek M.A."/>
        </authorList>
    </citation>
    <scope>NUCLEOTIDE SEQUENCE [LARGE SCALE GENOMIC DNA]</scope>
    <source>
        <strain>DSM 14350 / EX-H1</strain>
    </source>
</reference>
<comment type="function">
    <text evidence="1">NDH-1 shuttles electrons from NADH, via FMN and iron-sulfur (Fe-S) centers, to quinones in the respiratory chain. The immediate electron acceptor for the enzyme in this species is believed to be ubiquinone. Couples the redox reaction to proton translocation (for every two electrons transferred, four hydrogen ions are translocated across the cytoplasmic membrane), and thus conserves the redox energy in a proton gradient.</text>
</comment>
<comment type="catalytic activity">
    <reaction evidence="1">
        <text>a quinone + NADH + 5 H(+)(in) = a quinol + NAD(+) + 4 H(+)(out)</text>
        <dbReference type="Rhea" id="RHEA:57888"/>
        <dbReference type="ChEBI" id="CHEBI:15378"/>
        <dbReference type="ChEBI" id="CHEBI:24646"/>
        <dbReference type="ChEBI" id="CHEBI:57540"/>
        <dbReference type="ChEBI" id="CHEBI:57945"/>
        <dbReference type="ChEBI" id="CHEBI:132124"/>
    </reaction>
</comment>
<comment type="subunit">
    <text evidence="1">NDH-1 is composed of 14 different subunits. Subunits NuoA, H, J, K, L, M, N constitute the membrane sector of the complex.</text>
</comment>
<comment type="subcellular location">
    <subcellularLocation>
        <location evidence="1">Cell inner membrane</location>
        <topology evidence="1">Multi-pass membrane protein</topology>
    </subcellularLocation>
</comment>
<comment type="similarity">
    <text evidence="1">Belongs to the complex I subunit 4L family.</text>
</comment>
<keyword id="KW-0997">Cell inner membrane</keyword>
<keyword id="KW-1003">Cell membrane</keyword>
<keyword id="KW-0472">Membrane</keyword>
<keyword id="KW-0520">NAD</keyword>
<keyword id="KW-0874">Quinone</keyword>
<keyword id="KW-1185">Reference proteome</keyword>
<keyword id="KW-1278">Translocase</keyword>
<keyword id="KW-0812">Transmembrane</keyword>
<keyword id="KW-1133">Transmembrane helix</keyword>
<keyword id="KW-0813">Transport</keyword>
<keyword id="KW-0830">Ubiquinone</keyword>